<proteinExistence type="inferred from homology"/>
<reference key="1">
    <citation type="journal article" date="2003" name="Nat. Genet.">
        <title>Comparative analysis of the genome sequences of Bordetella pertussis, Bordetella parapertussis and Bordetella bronchiseptica.</title>
        <authorList>
            <person name="Parkhill J."/>
            <person name="Sebaihia M."/>
            <person name="Preston A."/>
            <person name="Murphy L.D."/>
            <person name="Thomson N.R."/>
            <person name="Harris D.E."/>
            <person name="Holden M.T.G."/>
            <person name="Churcher C.M."/>
            <person name="Bentley S.D."/>
            <person name="Mungall K.L."/>
            <person name="Cerdeno-Tarraga A.-M."/>
            <person name="Temple L."/>
            <person name="James K.D."/>
            <person name="Harris B."/>
            <person name="Quail M.A."/>
            <person name="Achtman M."/>
            <person name="Atkin R."/>
            <person name="Baker S."/>
            <person name="Basham D."/>
            <person name="Bason N."/>
            <person name="Cherevach I."/>
            <person name="Chillingworth T."/>
            <person name="Collins M."/>
            <person name="Cronin A."/>
            <person name="Davis P."/>
            <person name="Doggett J."/>
            <person name="Feltwell T."/>
            <person name="Goble A."/>
            <person name="Hamlin N."/>
            <person name="Hauser H."/>
            <person name="Holroyd S."/>
            <person name="Jagels K."/>
            <person name="Leather S."/>
            <person name="Moule S."/>
            <person name="Norberczak H."/>
            <person name="O'Neil S."/>
            <person name="Ormond D."/>
            <person name="Price C."/>
            <person name="Rabbinowitsch E."/>
            <person name="Rutter S."/>
            <person name="Sanders M."/>
            <person name="Saunders D."/>
            <person name="Seeger K."/>
            <person name="Sharp S."/>
            <person name="Simmonds M."/>
            <person name="Skelton J."/>
            <person name="Squares R."/>
            <person name="Squares S."/>
            <person name="Stevens K."/>
            <person name="Unwin L."/>
            <person name="Whitehead S."/>
            <person name="Barrell B.G."/>
            <person name="Maskell D.J."/>
        </authorList>
    </citation>
    <scope>NUCLEOTIDE SEQUENCE [LARGE SCALE GENOMIC DNA]</scope>
    <source>
        <strain>ATCC BAA-588 / NCTC 13252 / RB50</strain>
    </source>
</reference>
<protein>
    <recommendedName>
        <fullName evidence="1">ATP-dependent Clp protease proteolytic subunit</fullName>
        <ecNumber evidence="1">3.4.21.92</ecNumber>
    </recommendedName>
    <alternativeName>
        <fullName evidence="1">Endopeptidase Clp</fullName>
    </alternativeName>
</protein>
<comment type="function">
    <text evidence="1">Cleaves peptides in various proteins in a process that requires ATP hydrolysis. Has a chymotrypsin-like activity. Plays a major role in the degradation of misfolded proteins.</text>
</comment>
<comment type="catalytic activity">
    <reaction evidence="1">
        <text>Hydrolysis of proteins to small peptides in the presence of ATP and magnesium. alpha-casein is the usual test substrate. In the absence of ATP, only oligopeptides shorter than five residues are hydrolyzed (such as succinyl-Leu-Tyr-|-NHMec, and Leu-Tyr-Leu-|-Tyr-Trp, in which cleavage of the -Tyr-|-Leu- and -Tyr-|-Trp bonds also occurs).</text>
        <dbReference type="EC" id="3.4.21.92"/>
    </reaction>
</comment>
<comment type="subunit">
    <text evidence="1">Fourteen ClpP subunits assemble into 2 heptameric rings which stack back to back to give a disk-like structure with a central cavity, resembling the structure of eukaryotic proteasomes.</text>
</comment>
<comment type="subcellular location">
    <subcellularLocation>
        <location evidence="1">Cytoplasm</location>
    </subcellularLocation>
</comment>
<comment type="similarity">
    <text evidence="1">Belongs to the peptidase S14 family.</text>
</comment>
<gene>
    <name evidence="1" type="primary">clpP</name>
    <name type="ordered locus">BB2254</name>
</gene>
<feature type="chain" id="PRO_0000179508" description="ATP-dependent Clp protease proteolytic subunit">
    <location>
        <begin position="1"/>
        <end position="217"/>
    </location>
</feature>
<feature type="active site" description="Nucleophile" evidence="1">
    <location>
        <position position="119"/>
    </location>
</feature>
<feature type="active site" evidence="1">
    <location>
        <position position="144"/>
    </location>
</feature>
<keyword id="KW-0963">Cytoplasm</keyword>
<keyword id="KW-0378">Hydrolase</keyword>
<keyword id="KW-0645">Protease</keyword>
<keyword id="KW-0720">Serine protease</keyword>
<sequence length="217" mass="23775">MQRFTDFYAAMHGGSSVTPTGLGYIPMVIEQSGRGERAYDIYSRLLRERLIFLVGPVNDNTANLVVAQLLFLESENPDKDISFYINSPGGSVYAGMAIYDTMQFIKPDVSTLCTGLAASMGAFLLAAGKKGKRFTLPNSRIMIHQPSGGAQGQASDIQIQAREILDLRERLNRILAENTGQPVERIAVDTERDNFMSAEDAVSYGLVDKVLTSRAQT</sequence>
<evidence type="ECO:0000255" key="1">
    <source>
        <dbReference type="HAMAP-Rule" id="MF_00444"/>
    </source>
</evidence>
<name>CLPP_BORBR</name>
<accession>Q7WK83</accession>
<dbReference type="EC" id="3.4.21.92" evidence="1"/>
<dbReference type="EMBL" id="BX640443">
    <property type="protein sequence ID" value="CAE32750.1"/>
    <property type="molecule type" value="Genomic_DNA"/>
</dbReference>
<dbReference type="RefSeq" id="WP_003812508.1">
    <property type="nucleotide sequence ID" value="NC_002927.3"/>
</dbReference>
<dbReference type="SMR" id="Q7WK83"/>
<dbReference type="MEROPS" id="S14.001"/>
<dbReference type="GeneID" id="93203780"/>
<dbReference type="KEGG" id="bbr:BB2254"/>
<dbReference type="eggNOG" id="COG0740">
    <property type="taxonomic scope" value="Bacteria"/>
</dbReference>
<dbReference type="HOGENOM" id="CLU_058707_3_2_4"/>
<dbReference type="Proteomes" id="UP000001027">
    <property type="component" value="Chromosome"/>
</dbReference>
<dbReference type="GO" id="GO:0005737">
    <property type="term" value="C:cytoplasm"/>
    <property type="evidence" value="ECO:0007669"/>
    <property type="project" value="UniProtKB-SubCell"/>
</dbReference>
<dbReference type="GO" id="GO:0009368">
    <property type="term" value="C:endopeptidase Clp complex"/>
    <property type="evidence" value="ECO:0007669"/>
    <property type="project" value="TreeGrafter"/>
</dbReference>
<dbReference type="GO" id="GO:0004176">
    <property type="term" value="F:ATP-dependent peptidase activity"/>
    <property type="evidence" value="ECO:0007669"/>
    <property type="project" value="InterPro"/>
</dbReference>
<dbReference type="GO" id="GO:0051117">
    <property type="term" value="F:ATPase binding"/>
    <property type="evidence" value="ECO:0007669"/>
    <property type="project" value="TreeGrafter"/>
</dbReference>
<dbReference type="GO" id="GO:0004252">
    <property type="term" value="F:serine-type endopeptidase activity"/>
    <property type="evidence" value="ECO:0007669"/>
    <property type="project" value="UniProtKB-UniRule"/>
</dbReference>
<dbReference type="GO" id="GO:0006515">
    <property type="term" value="P:protein quality control for misfolded or incompletely synthesized proteins"/>
    <property type="evidence" value="ECO:0007669"/>
    <property type="project" value="TreeGrafter"/>
</dbReference>
<dbReference type="CDD" id="cd07017">
    <property type="entry name" value="S14_ClpP_2"/>
    <property type="match status" value="1"/>
</dbReference>
<dbReference type="FunFam" id="3.90.226.10:FF:000001">
    <property type="entry name" value="ATP-dependent Clp protease proteolytic subunit"/>
    <property type="match status" value="1"/>
</dbReference>
<dbReference type="Gene3D" id="3.90.226.10">
    <property type="entry name" value="2-enoyl-CoA Hydratase, Chain A, domain 1"/>
    <property type="match status" value="1"/>
</dbReference>
<dbReference type="HAMAP" id="MF_00444">
    <property type="entry name" value="ClpP"/>
    <property type="match status" value="1"/>
</dbReference>
<dbReference type="InterPro" id="IPR001907">
    <property type="entry name" value="ClpP"/>
</dbReference>
<dbReference type="InterPro" id="IPR029045">
    <property type="entry name" value="ClpP/crotonase-like_dom_sf"/>
</dbReference>
<dbReference type="InterPro" id="IPR023562">
    <property type="entry name" value="ClpP/TepA"/>
</dbReference>
<dbReference type="InterPro" id="IPR033135">
    <property type="entry name" value="ClpP_His_AS"/>
</dbReference>
<dbReference type="NCBIfam" id="TIGR00493">
    <property type="entry name" value="clpP"/>
    <property type="match status" value="1"/>
</dbReference>
<dbReference type="NCBIfam" id="NF001368">
    <property type="entry name" value="PRK00277.1"/>
    <property type="match status" value="1"/>
</dbReference>
<dbReference type="NCBIfam" id="NF009205">
    <property type="entry name" value="PRK12553.1"/>
    <property type="match status" value="1"/>
</dbReference>
<dbReference type="PANTHER" id="PTHR10381">
    <property type="entry name" value="ATP-DEPENDENT CLP PROTEASE PROTEOLYTIC SUBUNIT"/>
    <property type="match status" value="1"/>
</dbReference>
<dbReference type="PANTHER" id="PTHR10381:SF70">
    <property type="entry name" value="ATP-DEPENDENT CLP PROTEASE PROTEOLYTIC SUBUNIT"/>
    <property type="match status" value="1"/>
</dbReference>
<dbReference type="Pfam" id="PF00574">
    <property type="entry name" value="CLP_protease"/>
    <property type="match status" value="1"/>
</dbReference>
<dbReference type="PRINTS" id="PR00127">
    <property type="entry name" value="CLPPROTEASEP"/>
</dbReference>
<dbReference type="SUPFAM" id="SSF52096">
    <property type="entry name" value="ClpP/crotonase"/>
    <property type="match status" value="1"/>
</dbReference>
<dbReference type="PROSITE" id="PS00382">
    <property type="entry name" value="CLP_PROTEASE_HIS"/>
    <property type="match status" value="1"/>
</dbReference>
<organism>
    <name type="scientific">Bordetella bronchiseptica (strain ATCC BAA-588 / NCTC 13252 / RB50)</name>
    <name type="common">Alcaligenes bronchisepticus</name>
    <dbReference type="NCBI Taxonomy" id="257310"/>
    <lineage>
        <taxon>Bacteria</taxon>
        <taxon>Pseudomonadati</taxon>
        <taxon>Pseudomonadota</taxon>
        <taxon>Betaproteobacteria</taxon>
        <taxon>Burkholderiales</taxon>
        <taxon>Alcaligenaceae</taxon>
        <taxon>Bordetella</taxon>
    </lineage>
</organism>